<proteinExistence type="inferred from homology"/>
<sequence length="239" mass="24684">MILYPAIDLKDGQCVRLLRGEMEAATVFGDDPAAQAAAFEAAGCEWLHLVDLNGAFAGHPVNGAAVEAILARLTVPAQLGGGIRDMKTIALWLEKGLARVILGTVAVENPALVREAARAFPGRVAVGIDARKGRVATKGWATETDVMATDLARSFEDAGVAALIYTDIDRDGAMAGPNIEATDALARAVSIPVIASGGVSSLADLVALRDTGRIAGAISGRALYDGALDLAEALRTLRA</sequence>
<feature type="chain" id="PRO_1000063229" description="1-(5-phosphoribosyl)-5-[(5-phosphoribosylamino)methylideneamino] imidazole-4-carboxamide isomerase">
    <location>
        <begin position="1"/>
        <end position="239"/>
    </location>
</feature>
<feature type="active site" description="Proton acceptor" evidence="1">
    <location>
        <position position="8"/>
    </location>
</feature>
<feature type="active site" description="Proton donor" evidence="1">
    <location>
        <position position="129"/>
    </location>
</feature>
<reference key="1">
    <citation type="submission" date="2007-04" db="EMBL/GenBank/DDBJ databases">
        <title>Complete sequence of chromosome of Rhodobacter sphaeroides ATCC 17025.</title>
        <authorList>
            <consortium name="US DOE Joint Genome Institute"/>
            <person name="Copeland A."/>
            <person name="Lucas S."/>
            <person name="Lapidus A."/>
            <person name="Barry K."/>
            <person name="Detter J.C."/>
            <person name="Glavina del Rio T."/>
            <person name="Hammon N."/>
            <person name="Israni S."/>
            <person name="Dalin E."/>
            <person name="Tice H."/>
            <person name="Pitluck S."/>
            <person name="Chertkov O."/>
            <person name="Brettin T."/>
            <person name="Bruce D."/>
            <person name="Han C."/>
            <person name="Schmutz J."/>
            <person name="Larimer F."/>
            <person name="Land M."/>
            <person name="Hauser L."/>
            <person name="Kyrpides N."/>
            <person name="Kim E."/>
            <person name="Richardson P."/>
            <person name="Mackenzie C."/>
            <person name="Choudhary M."/>
            <person name="Donohue T.J."/>
            <person name="Kaplan S."/>
        </authorList>
    </citation>
    <scope>NUCLEOTIDE SEQUENCE [LARGE SCALE GENOMIC DNA]</scope>
    <source>
        <strain>ATCC 17025 / ATH 2.4.3</strain>
    </source>
</reference>
<comment type="catalytic activity">
    <reaction evidence="1">
        <text>1-(5-phospho-beta-D-ribosyl)-5-[(5-phospho-beta-D-ribosylamino)methylideneamino]imidazole-4-carboxamide = 5-[(5-phospho-1-deoxy-D-ribulos-1-ylimino)methylamino]-1-(5-phospho-beta-D-ribosyl)imidazole-4-carboxamide</text>
        <dbReference type="Rhea" id="RHEA:15469"/>
        <dbReference type="ChEBI" id="CHEBI:58435"/>
        <dbReference type="ChEBI" id="CHEBI:58525"/>
        <dbReference type="EC" id="5.3.1.16"/>
    </reaction>
</comment>
<comment type="pathway">
    <text evidence="1">Amino-acid biosynthesis; L-histidine biosynthesis; L-histidine from 5-phospho-alpha-D-ribose 1-diphosphate: step 4/9.</text>
</comment>
<comment type="subcellular location">
    <subcellularLocation>
        <location evidence="1">Cytoplasm</location>
    </subcellularLocation>
</comment>
<comment type="similarity">
    <text evidence="1">Belongs to the HisA/HisF family.</text>
</comment>
<keyword id="KW-0028">Amino-acid biosynthesis</keyword>
<keyword id="KW-0963">Cytoplasm</keyword>
<keyword id="KW-0368">Histidine biosynthesis</keyword>
<keyword id="KW-0413">Isomerase</keyword>
<gene>
    <name evidence="1" type="primary">hisA</name>
    <name type="ordered locus">Rsph17025_2251</name>
</gene>
<dbReference type="EC" id="5.3.1.16" evidence="1"/>
<dbReference type="EMBL" id="CP000661">
    <property type="protein sequence ID" value="ABP71141.1"/>
    <property type="molecule type" value="Genomic_DNA"/>
</dbReference>
<dbReference type="SMR" id="A4WUS7"/>
<dbReference type="STRING" id="349102.Rsph17025_2251"/>
<dbReference type="KEGG" id="rsq:Rsph17025_2251"/>
<dbReference type="eggNOG" id="COG0106">
    <property type="taxonomic scope" value="Bacteria"/>
</dbReference>
<dbReference type="HOGENOM" id="CLU_048577_1_1_5"/>
<dbReference type="BioCyc" id="RSPH349102:G1G8M-2321-MONOMER"/>
<dbReference type="UniPathway" id="UPA00031">
    <property type="reaction ID" value="UER00009"/>
</dbReference>
<dbReference type="GO" id="GO:0005737">
    <property type="term" value="C:cytoplasm"/>
    <property type="evidence" value="ECO:0007669"/>
    <property type="project" value="UniProtKB-SubCell"/>
</dbReference>
<dbReference type="GO" id="GO:0003949">
    <property type="term" value="F:1-(5-phosphoribosyl)-5-[(5-phosphoribosylamino)methylideneamino]imidazole-4-carboxamide isomerase activity"/>
    <property type="evidence" value="ECO:0007669"/>
    <property type="project" value="UniProtKB-UniRule"/>
</dbReference>
<dbReference type="GO" id="GO:0000105">
    <property type="term" value="P:L-histidine biosynthetic process"/>
    <property type="evidence" value="ECO:0007669"/>
    <property type="project" value="UniProtKB-UniRule"/>
</dbReference>
<dbReference type="GO" id="GO:0000162">
    <property type="term" value="P:L-tryptophan biosynthetic process"/>
    <property type="evidence" value="ECO:0007669"/>
    <property type="project" value="TreeGrafter"/>
</dbReference>
<dbReference type="CDD" id="cd04732">
    <property type="entry name" value="HisA"/>
    <property type="match status" value="1"/>
</dbReference>
<dbReference type="FunFam" id="3.20.20.70:FF:000009">
    <property type="entry name" value="1-(5-phosphoribosyl)-5-[(5-phosphoribosylamino)methylideneamino] imidazole-4-carboxamide isomerase"/>
    <property type="match status" value="1"/>
</dbReference>
<dbReference type="Gene3D" id="3.20.20.70">
    <property type="entry name" value="Aldolase class I"/>
    <property type="match status" value="1"/>
</dbReference>
<dbReference type="HAMAP" id="MF_01014">
    <property type="entry name" value="HisA"/>
    <property type="match status" value="1"/>
</dbReference>
<dbReference type="InterPro" id="IPR013785">
    <property type="entry name" value="Aldolase_TIM"/>
</dbReference>
<dbReference type="InterPro" id="IPR006062">
    <property type="entry name" value="His_biosynth"/>
</dbReference>
<dbReference type="InterPro" id="IPR006063">
    <property type="entry name" value="HisA_bact_arch"/>
</dbReference>
<dbReference type="InterPro" id="IPR044524">
    <property type="entry name" value="Isoase_HisA-like"/>
</dbReference>
<dbReference type="InterPro" id="IPR023016">
    <property type="entry name" value="Isoase_HisA-like_bact"/>
</dbReference>
<dbReference type="InterPro" id="IPR011060">
    <property type="entry name" value="RibuloseP-bd_barrel"/>
</dbReference>
<dbReference type="NCBIfam" id="TIGR00007">
    <property type="entry name" value="1-(5-phosphoribosyl)-5-[(5-phosphoribosylamino)methylideneamino]imidazole-4-carboxamide isomerase"/>
    <property type="match status" value="1"/>
</dbReference>
<dbReference type="PANTHER" id="PTHR43090">
    <property type="entry name" value="1-(5-PHOSPHORIBOSYL)-5-[(5-PHOSPHORIBOSYLAMINO)METHYLIDENEAMINO] IMIDAZOLE-4-CARBOXAMIDE ISOMERASE"/>
    <property type="match status" value="1"/>
</dbReference>
<dbReference type="PANTHER" id="PTHR43090:SF2">
    <property type="entry name" value="1-(5-PHOSPHORIBOSYL)-5-[(5-PHOSPHORIBOSYLAMINO)METHYLIDENEAMINO] IMIDAZOLE-4-CARBOXAMIDE ISOMERASE"/>
    <property type="match status" value="1"/>
</dbReference>
<dbReference type="Pfam" id="PF00977">
    <property type="entry name" value="His_biosynth"/>
    <property type="match status" value="1"/>
</dbReference>
<dbReference type="SUPFAM" id="SSF51366">
    <property type="entry name" value="Ribulose-phoshate binding barrel"/>
    <property type="match status" value="1"/>
</dbReference>
<evidence type="ECO:0000255" key="1">
    <source>
        <dbReference type="HAMAP-Rule" id="MF_01014"/>
    </source>
</evidence>
<name>HIS4_CERS5</name>
<organism>
    <name type="scientific">Cereibacter sphaeroides (strain ATCC 17025 / ATH 2.4.3)</name>
    <name type="common">Rhodobacter sphaeroides</name>
    <dbReference type="NCBI Taxonomy" id="349102"/>
    <lineage>
        <taxon>Bacteria</taxon>
        <taxon>Pseudomonadati</taxon>
        <taxon>Pseudomonadota</taxon>
        <taxon>Alphaproteobacteria</taxon>
        <taxon>Rhodobacterales</taxon>
        <taxon>Paracoccaceae</taxon>
        <taxon>Cereibacter</taxon>
    </lineage>
</organism>
<protein>
    <recommendedName>
        <fullName evidence="1">1-(5-phosphoribosyl)-5-[(5-phosphoribosylamino)methylideneamino] imidazole-4-carboxamide isomerase</fullName>
        <ecNumber evidence="1">5.3.1.16</ecNumber>
    </recommendedName>
    <alternativeName>
        <fullName evidence="1">Phosphoribosylformimino-5-aminoimidazole carboxamide ribotide isomerase</fullName>
    </alternativeName>
</protein>
<accession>A4WUS7</accession>